<feature type="chain" id="PRO_1000098983" description="4-hydroxy-3-methylbut-2-enyl diphosphate reductase">
    <location>
        <begin position="1"/>
        <end position="288"/>
    </location>
</feature>
<feature type="active site" description="Proton donor" evidence="1">
    <location>
        <position position="129"/>
    </location>
</feature>
<feature type="binding site" evidence="1">
    <location>
        <position position="12"/>
    </location>
    <ligand>
        <name>[4Fe-4S] cluster</name>
        <dbReference type="ChEBI" id="CHEBI:49883"/>
    </ligand>
</feature>
<feature type="binding site" evidence="1">
    <location>
        <position position="42"/>
    </location>
    <ligand>
        <name>(2E)-4-hydroxy-3-methylbut-2-enyl diphosphate</name>
        <dbReference type="ChEBI" id="CHEBI:128753"/>
    </ligand>
</feature>
<feature type="binding site" evidence="1">
    <location>
        <position position="42"/>
    </location>
    <ligand>
        <name>dimethylallyl diphosphate</name>
        <dbReference type="ChEBI" id="CHEBI:57623"/>
    </ligand>
</feature>
<feature type="binding site" evidence="1">
    <location>
        <position position="42"/>
    </location>
    <ligand>
        <name>isopentenyl diphosphate</name>
        <dbReference type="ChEBI" id="CHEBI:128769"/>
    </ligand>
</feature>
<feature type="binding site" evidence="1">
    <location>
        <position position="77"/>
    </location>
    <ligand>
        <name>(2E)-4-hydroxy-3-methylbut-2-enyl diphosphate</name>
        <dbReference type="ChEBI" id="CHEBI:128753"/>
    </ligand>
</feature>
<feature type="binding site" evidence="1">
    <location>
        <position position="77"/>
    </location>
    <ligand>
        <name>dimethylallyl diphosphate</name>
        <dbReference type="ChEBI" id="CHEBI:57623"/>
    </ligand>
</feature>
<feature type="binding site" evidence="1">
    <location>
        <position position="77"/>
    </location>
    <ligand>
        <name>isopentenyl diphosphate</name>
        <dbReference type="ChEBI" id="CHEBI:128769"/>
    </ligand>
</feature>
<feature type="binding site" evidence="1">
    <location>
        <position position="99"/>
    </location>
    <ligand>
        <name>[4Fe-4S] cluster</name>
        <dbReference type="ChEBI" id="CHEBI:49883"/>
    </ligand>
</feature>
<feature type="binding site" evidence="1">
    <location>
        <position position="127"/>
    </location>
    <ligand>
        <name>(2E)-4-hydroxy-3-methylbut-2-enyl diphosphate</name>
        <dbReference type="ChEBI" id="CHEBI:128753"/>
    </ligand>
</feature>
<feature type="binding site" evidence="1">
    <location>
        <position position="127"/>
    </location>
    <ligand>
        <name>dimethylallyl diphosphate</name>
        <dbReference type="ChEBI" id="CHEBI:57623"/>
    </ligand>
</feature>
<feature type="binding site" evidence="1">
    <location>
        <position position="127"/>
    </location>
    <ligand>
        <name>isopentenyl diphosphate</name>
        <dbReference type="ChEBI" id="CHEBI:128769"/>
    </ligand>
</feature>
<feature type="binding site" evidence="1">
    <location>
        <position position="165"/>
    </location>
    <ligand>
        <name>(2E)-4-hydroxy-3-methylbut-2-enyl diphosphate</name>
        <dbReference type="ChEBI" id="CHEBI:128753"/>
    </ligand>
</feature>
<feature type="binding site" evidence="1">
    <location>
        <position position="193"/>
    </location>
    <ligand>
        <name>[4Fe-4S] cluster</name>
        <dbReference type="ChEBI" id="CHEBI:49883"/>
    </ligand>
</feature>
<feature type="binding site" evidence="1">
    <location>
        <position position="221"/>
    </location>
    <ligand>
        <name>(2E)-4-hydroxy-3-methylbut-2-enyl diphosphate</name>
        <dbReference type="ChEBI" id="CHEBI:128753"/>
    </ligand>
</feature>
<feature type="binding site" evidence="1">
    <location>
        <position position="221"/>
    </location>
    <ligand>
        <name>dimethylallyl diphosphate</name>
        <dbReference type="ChEBI" id="CHEBI:57623"/>
    </ligand>
</feature>
<feature type="binding site" evidence="1">
    <location>
        <position position="221"/>
    </location>
    <ligand>
        <name>isopentenyl diphosphate</name>
        <dbReference type="ChEBI" id="CHEBI:128769"/>
    </ligand>
</feature>
<feature type="binding site" evidence="1">
    <location>
        <position position="222"/>
    </location>
    <ligand>
        <name>(2E)-4-hydroxy-3-methylbut-2-enyl diphosphate</name>
        <dbReference type="ChEBI" id="CHEBI:128753"/>
    </ligand>
</feature>
<feature type="binding site" evidence="1">
    <location>
        <position position="222"/>
    </location>
    <ligand>
        <name>dimethylallyl diphosphate</name>
        <dbReference type="ChEBI" id="CHEBI:57623"/>
    </ligand>
</feature>
<feature type="binding site" evidence="1">
    <location>
        <position position="222"/>
    </location>
    <ligand>
        <name>isopentenyl diphosphate</name>
        <dbReference type="ChEBI" id="CHEBI:128769"/>
    </ligand>
</feature>
<feature type="binding site" evidence="1">
    <location>
        <position position="223"/>
    </location>
    <ligand>
        <name>(2E)-4-hydroxy-3-methylbut-2-enyl diphosphate</name>
        <dbReference type="ChEBI" id="CHEBI:128753"/>
    </ligand>
</feature>
<feature type="binding site" evidence="1">
    <location>
        <position position="223"/>
    </location>
    <ligand>
        <name>dimethylallyl diphosphate</name>
        <dbReference type="ChEBI" id="CHEBI:57623"/>
    </ligand>
</feature>
<feature type="binding site" evidence="1">
    <location>
        <position position="223"/>
    </location>
    <ligand>
        <name>isopentenyl diphosphate</name>
        <dbReference type="ChEBI" id="CHEBI:128769"/>
    </ligand>
</feature>
<feature type="binding site" evidence="1">
    <location>
        <position position="265"/>
    </location>
    <ligand>
        <name>(2E)-4-hydroxy-3-methylbut-2-enyl diphosphate</name>
        <dbReference type="ChEBI" id="CHEBI:128753"/>
    </ligand>
</feature>
<feature type="binding site" evidence="1">
    <location>
        <position position="265"/>
    </location>
    <ligand>
        <name>dimethylallyl diphosphate</name>
        <dbReference type="ChEBI" id="CHEBI:57623"/>
    </ligand>
</feature>
<feature type="binding site" evidence="1">
    <location>
        <position position="265"/>
    </location>
    <ligand>
        <name>isopentenyl diphosphate</name>
        <dbReference type="ChEBI" id="CHEBI:128769"/>
    </ligand>
</feature>
<dbReference type="EC" id="1.17.7.4" evidence="1"/>
<dbReference type="EMBL" id="CP000923">
    <property type="protein sequence ID" value="ABY92892.1"/>
    <property type="molecule type" value="Genomic_DNA"/>
</dbReference>
<dbReference type="RefSeq" id="WP_009052375.1">
    <property type="nucleotide sequence ID" value="NC_010320.1"/>
</dbReference>
<dbReference type="SMR" id="B0K197"/>
<dbReference type="KEGG" id="tex:Teth514_1606"/>
<dbReference type="HOGENOM" id="CLU_027486_0_1_9"/>
<dbReference type="UniPathway" id="UPA00056">
    <property type="reaction ID" value="UER00097"/>
</dbReference>
<dbReference type="UniPathway" id="UPA00059">
    <property type="reaction ID" value="UER00105"/>
</dbReference>
<dbReference type="Proteomes" id="UP000002155">
    <property type="component" value="Chromosome"/>
</dbReference>
<dbReference type="GO" id="GO:0051539">
    <property type="term" value="F:4 iron, 4 sulfur cluster binding"/>
    <property type="evidence" value="ECO:0007669"/>
    <property type="project" value="UniProtKB-UniRule"/>
</dbReference>
<dbReference type="GO" id="GO:0051745">
    <property type="term" value="F:4-hydroxy-3-methylbut-2-enyl diphosphate reductase activity"/>
    <property type="evidence" value="ECO:0007669"/>
    <property type="project" value="UniProtKB-UniRule"/>
</dbReference>
<dbReference type="GO" id="GO:0046872">
    <property type="term" value="F:metal ion binding"/>
    <property type="evidence" value="ECO:0007669"/>
    <property type="project" value="UniProtKB-KW"/>
</dbReference>
<dbReference type="GO" id="GO:0050992">
    <property type="term" value="P:dimethylallyl diphosphate biosynthetic process"/>
    <property type="evidence" value="ECO:0007669"/>
    <property type="project" value="UniProtKB-UniRule"/>
</dbReference>
<dbReference type="GO" id="GO:0019288">
    <property type="term" value="P:isopentenyl diphosphate biosynthetic process, methylerythritol 4-phosphate pathway"/>
    <property type="evidence" value="ECO:0007669"/>
    <property type="project" value="UniProtKB-UniRule"/>
</dbReference>
<dbReference type="GO" id="GO:0016114">
    <property type="term" value="P:terpenoid biosynthetic process"/>
    <property type="evidence" value="ECO:0007669"/>
    <property type="project" value="UniProtKB-UniRule"/>
</dbReference>
<dbReference type="CDD" id="cd13944">
    <property type="entry name" value="lytB_ispH"/>
    <property type="match status" value="1"/>
</dbReference>
<dbReference type="Gene3D" id="3.40.50.11270">
    <property type="match status" value="1"/>
</dbReference>
<dbReference type="Gene3D" id="3.40.1010.20">
    <property type="entry name" value="4-hydroxy-3-methylbut-2-enyl diphosphate reductase, catalytic domain"/>
    <property type="match status" value="2"/>
</dbReference>
<dbReference type="HAMAP" id="MF_00191">
    <property type="entry name" value="IspH"/>
    <property type="match status" value="1"/>
</dbReference>
<dbReference type="InterPro" id="IPR003451">
    <property type="entry name" value="LytB/IspH"/>
</dbReference>
<dbReference type="NCBIfam" id="TIGR00216">
    <property type="entry name" value="ispH_lytB"/>
    <property type="match status" value="1"/>
</dbReference>
<dbReference type="NCBIfam" id="NF002187">
    <property type="entry name" value="PRK01045.1-1"/>
    <property type="match status" value="1"/>
</dbReference>
<dbReference type="NCBIfam" id="NF009024">
    <property type="entry name" value="PRK12360.1"/>
    <property type="match status" value="1"/>
</dbReference>
<dbReference type="PANTHER" id="PTHR30426">
    <property type="entry name" value="4-HYDROXY-3-METHYLBUT-2-ENYL DIPHOSPHATE REDUCTASE"/>
    <property type="match status" value="1"/>
</dbReference>
<dbReference type="PANTHER" id="PTHR30426:SF0">
    <property type="entry name" value="4-HYDROXY-3-METHYLBUT-2-ENYL DIPHOSPHATE REDUCTASE"/>
    <property type="match status" value="1"/>
</dbReference>
<dbReference type="Pfam" id="PF02401">
    <property type="entry name" value="LYTB"/>
    <property type="match status" value="1"/>
</dbReference>
<organism>
    <name type="scientific">Thermoanaerobacter sp. (strain X514)</name>
    <dbReference type="NCBI Taxonomy" id="399726"/>
    <lineage>
        <taxon>Bacteria</taxon>
        <taxon>Bacillati</taxon>
        <taxon>Bacillota</taxon>
        <taxon>Clostridia</taxon>
        <taxon>Thermoanaerobacterales</taxon>
        <taxon>Thermoanaerobacteraceae</taxon>
        <taxon>Thermoanaerobacter</taxon>
    </lineage>
</organism>
<proteinExistence type="inferred from homology"/>
<name>ISPH_THEPX</name>
<accession>B0K197</accession>
<gene>
    <name evidence="1" type="primary">ispH</name>
    <name type="ordered locus">Teth514_1606</name>
</gene>
<sequence length="288" mass="32545">MKILIAEYAGFCFGVKRAIETAYQEIEKGDGKKIYTLGEIIHNPQVISDLSKKGVNVIEEEELDKLTEGDKLIIRSHGVSKKLYDFLAKKGVEVIDVTCPFVKKVQNIVYEYYHKGYSIIIVGDRNHPEVIGVNGWCDDTAYVVNSIEEAYELPQLEKACAVAQTTLIEKHWKDILEVIKLKVKDLIFFNTICDATQKRQDAADELSKKVDVMFVIGGKHSSNTQKLKKICEKNCKNTFHIEDAEELTLEMVKDHEIIGVTAGASTPDYVIEDVIKKIRFLKGEDGDE</sequence>
<protein>
    <recommendedName>
        <fullName evidence="1">4-hydroxy-3-methylbut-2-enyl diphosphate reductase</fullName>
        <shortName evidence="1">HMBPP reductase</shortName>
        <ecNumber evidence="1">1.17.7.4</ecNumber>
    </recommendedName>
</protein>
<keyword id="KW-0004">4Fe-4S</keyword>
<keyword id="KW-0408">Iron</keyword>
<keyword id="KW-0411">Iron-sulfur</keyword>
<keyword id="KW-0414">Isoprene biosynthesis</keyword>
<keyword id="KW-0479">Metal-binding</keyword>
<keyword id="KW-0560">Oxidoreductase</keyword>
<reference key="1">
    <citation type="submission" date="2008-01" db="EMBL/GenBank/DDBJ databases">
        <title>Complete sequence of Thermoanaerobacter sp. X514.</title>
        <authorList>
            <consortium name="US DOE Joint Genome Institute"/>
            <person name="Copeland A."/>
            <person name="Lucas S."/>
            <person name="Lapidus A."/>
            <person name="Barry K."/>
            <person name="Glavina del Rio T."/>
            <person name="Dalin E."/>
            <person name="Tice H."/>
            <person name="Pitluck S."/>
            <person name="Bruce D."/>
            <person name="Goodwin L."/>
            <person name="Saunders E."/>
            <person name="Brettin T."/>
            <person name="Detter J.C."/>
            <person name="Han C."/>
            <person name="Schmutz J."/>
            <person name="Larimer F."/>
            <person name="Land M."/>
            <person name="Hauser L."/>
            <person name="Kyrpides N."/>
            <person name="Kim E."/>
            <person name="Hemme C."/>
            <person name="Fields M.W."/>
            <person name="He Z."/>
            <person name="Zhou J."/>
            <person name="Richardson P."/>
        </authorList>
    </citation>
    <scope>NUCLEOTIDE SEQUENCE [LARGE SCALE GENOMIC DNA]</scope>
    <source>
        <strain>X514</strain>
    </source>
</reference>
<comment type="function">
    <text evidence="1">Catalyzes the conversion of 1-hydroxy-2-methyl-2-(E)-butenyl 4-diphosphate (HMBPP) into a mixture of isopentenyl diphosphate (IPP) and dimethylallyl diphosphate (DMAPP). Acts in the terminal step of the DOXP/MEP pathway for isoprenoid precursor biosynthesis.</text>
</comment>
<comment type="catalytic activity">
    <reaction evidence="1">
        <text>isopentenyl diphosphate + 2 oxidized [2Fe-2S]-[ferredoxin] + H2O = (2E)-4-hydroxy-3-methylbut-2-enyl diphosphate + 2 reduced [2Fe-2S]-[ferredoxin] + 2 H(+)</text>
        <dbReference type="Rhea" id="RHEA:24488"/>
        <dbReference type="Rhea" id="RHEA-COMP:10000"/>
        <dbReference type="Rhea" id="RHEA-COMP:10001"/>
        <dbReference type="ChEBI" id="CHEBI:15377"/>
        <dbReference type="ChEBI" id="CHEBI:15378"/>
        <dbReference type="ChEBI" id="CHEBI:33737"/>
        <dbReference type="ChEBI" id="CHEBI:33738"/>
        <dbReference type="ChEBI" id="CHEBI:128753"/>
        <dbReference type="ChEBI" id="CHEBI:128769"/>
        <dbReference type="EC" id="1.17.7.4"/>
    </reaction>
</comment>
<comment type="catalytic activity">
    <reaction evidence="1">
        <text>dimethylallyl diphosphate + 2 oxidized [2Fe-2S]-[ferredoxin] + H2O = (2E)-4-hydroxy-3-methylbut-2-enyl diphosphate + 2 reduced [2Fe-2S]-[ferredoxin] + 2 H(+)</text>
        <dbReference type="Rhea" id="RHEA:24825"/>
        <dbReference type="Rhea" id="RHEA-COMP:10000"/>
        <dbReference type="Rhea" id="RHEA-COMP:10001"/>
        <dbReference type="ChEBI" id="CHEBI:15377"/>
        <dbReference type="ChEBI" id="CHEBI:15378"/>
        <dbReference type="ChEBI" id="CHEBI:33737"/>
        <dbReference type="ChEBI" id="CHEBI:33738"/>
        <dbReference type="ChEBI" id="CHEBI:57623"/>
        <dbReference type="ChEBI" id="CHEBI:128753"/>
        <dbReference type="EC" id="1.17.7.4"/>
    </reaction>
</comment>
<comment type="cofactor">
    <cofactor evidence="1">
        <name>[4Fe-4S] cluster</name>
        <dbReference type="ChEBI" id="CHEBI:49883"/>
    </cofactor>
    <text evidence="1">Binds 1 [4Fe-4S] cluster per subunit.</text>
</comment>
<comment type="pathway">
    <text evidence="1">Isoprenoid biosynthesis; dimethylallyl diphosphate biosynthesis; dimethylallyl diphosphate from (2E)-4-hydroxy-3-methylbutenyl diphosphate: step 1/1.</text>
</comment>
<comment type="pathway">
    <text evidence="1">Isoprenoid biosynthesis; isopentenyl diphosphate biosynthesis via DXP pathway; isopentenyl diphosphate from 1-deoxy-D-xylulose 5-phosphate: step 6/6.</text>
</comment>
<comment type="similarity">
    <text evidence="1">Belongs to the IspH family.</text>
</comment>
<evidence type="ECO:0000255" key="1">
    <source>
        <dbReference type="HAMAP-Rule" id="MF_00191"/>
    </source>
</evidence>